<organism>
    <name type="scientific">Escherichia coli (strain K12)</name>
    <dbReference type="NCBI Taxonomy" id="83333"/>
    <lineage>
        <taxon>Bacteria</taxon>
        <taxon>Pseudomonadati</taxon>
        <taxon>Pseudomonadota</taxon>
        <taxon>Gammaproteobacteria</taxon>
        <taxon>Enterobacterales</taxon>
        <taxon>Enterobacteriaceae</taxon>
        <taxon>Escherichia</taxon>
    </lineage>
</organism>
<proteinExistence type="evidence at protein level"/>
<accession>P12996</accession>
<accession>Q2MBJ4</accession>
<reference key="1">
    <citation type="journal article" date="1988" name="J. Biol. Chem.">
        <title>The Escherichia coli biotin biosynthetic enzyme sequences predicted from the nucleotide sequence of the bio operon.</title>
        <authorList>
            <person name="Otsuka A.J."/>
            <person name="Buoncristiani M.R."/>
            <person name="Howard P.K."/>
            <person name="Flamm J."/>
            <person name="Johnson O."/>
            <person name="Yamamoto R."/>
            <person name="Uchida K."/>
            <person name="Cook C."/>
            <person name="Ruppert J."/>
            <person name="Matsuzaki J."/>
        </authorList>
    </citation>
    <scope>NUCLEOTIDE SEQUENCE [GENOMIC DNA]</scope>
</reference>
<reference key="2">
    <citation type="patent" date="1989-10-11" number="GB2216530">
        <title>Genetic material for expression of biotin synthetase enzymes.</title>
        <authorList>
            <person name="Pearson B.M."/>
            <person name="McKee R.A."/>
        </authorList>
    </citation>
    <scope>NUCLEOTIDE SEQUENCE [GENOMIC DNA]</scope>
</reference>
<reference key="3">
    <citation type="journal article" date="1997" name="Science">
        <title>The complete genome sequence of Escherichia coli K-12.</title>
        <authorList>
            <person name="Blattner F.R."/>
            <person name="Plunkett G. III"/>
            <person name="Bloch C.A."/>
            <person name="Perna N.T."/>
            <person name="Burland V."/>
            <person name="Riley M."/>
            <person name="Collado-Vides J."/>
            <person name="Glasner J.D."/>
            <person name="Rode C.K."/>
            <person name="Mayhew G.F."/>
            <person name="Gregor J."/>
            <person name="Davis N.W."/>
            <person name="Kirkpatrick H.A."/>
            <person name="Goeden M.A."/>
            <person name="Rose D.J."/>
            <person name="Mau B."/>
            <person name="Shao Y."/>
        </authorList>
    </citation>
    <scope>NUCLEOTIDE SEQUENCE [LARGE SCALE GENOMIC DNA]</scope>
    <source>
        <strain>K12 / MG1655 / ATCC 47076</strain>
    </source>
</reference>
<reference key="4">
    <citation type="journal article" date="2006" name="Mol. Syst. Biol.">
        <title>Highly accurate genome sequences of Escherichia coli K-12 strains MG1655 and W3110.</title>
        <authorList>
            <person name="Hayashi K."/>
            <person name="Morooka N."/>
            <person name="Yamamoto Y."/>
            <person name="Fujita K."/>
            <person name="Isono K."/>
            <person name="Choi S."/>
            <person name="Ohtsubo E."/>
            <person name="Baba T."/>
            <person name="Wanner B.L."/>
            <person name="Mori H."/>
            <person name="Horiuchi T."/>
        </authorList>
    </citation>
    <scope>NUCLEOTIDE SEQUENCE [LARGE SCALE GENOMIC DNA]</scope>
    <source>
        <strain>K12 / W3110 / ATCC 27325 / DSM 5911</strain>
    </source>
</reference>
<reference key="5">
    <citation type="journal article" date="1994" name="Biochemistry">
        <title>Biotin synthase: purification, characterization as a [2Fe-2S] cluster protein, and in vitro activity of the Escherichia coli bioB gene product.</title>
        <authorList>
            <person name="Sanyal I."/>
            <person name="Cohen G."/>
            <person name="Flint D.H."/>
        </authorList>
    </citation>
    <scope>PROTEIN SEQUENCE OF 1-17</scope>
    <scope>FUNCTION</scope>
    <scope>CATALYTIC ACTIVITY</scope>
    <scope>BIOPHYSICOCHEMICAL PROPERTIES</scope>
    <scope>COFACTOR</scope>
    <scope>SUBUNIT</scope>
</reference>
<reference key="6">
    <citation type="journal article" date="1997" name="Electrophoresis">
        <title>Escherichia coli proteome analysis using the gene-protein database.</title>
        <authorList>
            <person name="VanBogelen R.A."/>
            <person name="Abshire K.Z."/>
            <person name="Moldover B."/>
            <person name="Olson E.R."/>
            <person name="Neidhardt F.C."/>
        </authorList>
    </citation>
    <scope>IDENTIFICATION BY 2D-GEL</scope>
</reference>
<reference key="7">
    <citation type="journal article" date="2001" name="J. Biochem.">
        <title>Structure-function studies of Escherichia coli biotin synthase via a chemical modification and site-directed mutagenesis approach.</title>
        <authorList>
            <person name="Farh L."/>
            <person name="Hwang S.-Y."/>
            <person name="Steinrauf L."/>
            <person name="Chiang H.-J."/>
            <person name="Shiuan D."/>
        </authorList>
    </citation>
    <scope>MUTAGENESIS OF CYSTEINE RESIDUES</scope>
</reference>
<reference key="8">
    <citation type="journal article" date="2002" name="J. Am. Chem. Soc.">
        <title>The [4Fe-4S]2+ cluster in reconstituted biotin synthase binds S-adenosyl-L-methionine.</title>
        <authorList>
            <person name="Cosper M.M."/>
            <person name="Jameson G.N.L."/>
            <person name="Davydov R."/>
            <person name="Eidsness M.K."/>
            <person name="Hoffman B.M."/>
            <person name="Huynh B.H."/>
            <person name="Johnson M.K."/>
        </authorList>
    </citation>
    <scope>RESONANCE RAMAN SPECTROSCOPY</scope>
    <scope>EPR SPECTROSCOPY</scope>
    <scope>MOSSBAUER SPECTROSCOPY</scope>
</reference>
<reference key="9">
    <citation type="journal article" date="2002" name="J. Biol. Chem.">
        <title>Reductive cleavage of S-adenosylmethionine by biotin synthase from Escherichia coli.</title>
        <authorList>
            <person name="Ollagnier-de Choudens S."/>
            <person name="Sanakis Y."/>
            <person name="Hewitson K.S."/>
            <person name="Roach P."/>
            <person name="Muenck E."/>
            <person name="Fontecave M."/>
        </authorList>
    </citation>
    <scope>MUTAGENESIS OF CYS-53; CYS-57; CYS-60; CYS-97; CYS-128 AND CYS-188</scope>
    <scope>CATALYTIC ACTIVITY</scope>
    <scope>EPR SPECTROSCOPY</scope>
    <scope>MOSSBAUER SPECTROSCOPY</scope>
</reference>
<reference key="10">
    <citation type="journal article" date="2002" name="J. Biol. Inorg. Chem.">
        <title>The iron-sulfur center of biotin synthase: site-directed mutants.</title>
        <authorList>
            <person name="Hewitson K.S."/>
            <person name="Ollagnier-de Choudens S."/>
            <person name="Sanakis Y."/>
            <person name="Shaw N.M."/>
            <person name="Baldwin J.E."/>
            <person name="Muenck E."/>
            <person name="Roach P.L."/>
            <person name="Fontecave M."/>
        </authorList>
    </citation>
    <scope>MUTAGENESIS OF CYS-53; CYS-57; CYS-60; CYS-97; CYS-128 AND CYS-188</scope>
    <scope>EPR SPECTROSCOPY</scope>
    <scope>MOSSBAUER SPECTROSCOPY</scope>
</reference>
<reference key="11">
    <citation type="journal article" date="2003" name="Protein Sci.">
        <title>Structural studies of the interaction of S-adenosylmethionine with the [4Fe-4S] clusters in biotin synthase and pyruvate formate-lyase activating enzyme.</title>
        <authorList>
            <person name="Cosper M.M."/>
            <person name="Cosper N.J."/>
            <person name="Hong W."/>
            <person name="Shokes J.E."/>
            <person name="Broderick W.E."/>
            <person name="Broderick J.B."/>
            <person name="Johnson M.K."/>
            <person name="Scott R.A."/>
        </authorList>
    </citation>
    <scope>ABSORPTION SPECTROSCOPY</scope>
</reference>
<reference key="12">
    <citation type="journal article" date="2005" name="Chem. Biol.">
        <title>A nucleosidase required for in vivo function of the S-adenosyl-L-methionine radical enzyme, biotin synthase.</title>
        <authorList>
            <person name="Choi-Rhee E."/>
            <person name="Cronan J.E."/>
        </authorList>
    </citation>
    <scope>ACTIVITY REGULATION</scope>
</reference>
<reference key="13">
    <citation type="journal article" date="2009" name="Biochem. Biophys. Res. Commun.">
        <title>Iron-sulfur cluster dynamics in biotin synthase: a new [2Fe-2S](1+) cluster.</title>
        <authorList>
            <person name="Lotierzo M."/>
            <person name="Bui B.T."/>
            <person name="Leech H.K."/>
            <person name="Warren M.J."/>
            <person name="Marquet A."/>
            <person name="Rigby S.E."/>
        </authorList>
    </citation>
    <scope>REACTION MECHANISM</scope>
</reference>
<reference key="14">
    <citation type="journal article" date="2006" name="Biochemistry">
        <title>Biotin synthase mechanism: mutagenesis of the YNHNLD conserved motif.</title>
        <authorList>
            <person name="Lotierzo M."/>
            <person name="Raux E."/>
            <person name="Tse Sum Bui B."/>
            <person name="Goasdoue N."/>
            <person name="Libot F."/>
            <person name="Florentin D."/>
            <person name="Warren M.J."/>
            <person name="Marquet A."/>
        </authorList>
    </citation>
    <scope>MUTAGENESIS OF ASN-151; HIS-152; ASN-153 AND ASP-155</scope>
    <scope>CATALYTIC ACTIVITY</scope>
</reference>
<reference evidence="12" key="15">
    <citation type="journal article" date="2004" name="Science">
        <title>Crystal structure of biotin synthase, an S-adenosylmethionine-dependent radical enzyme.</title>
        <authorList>
            <person name="Berkovitch F."/>
            <person name="Nicolet Y."/>
            <person name="Wan J.T."/>
            <person name="Jarrett J.T."/>
            <person name="Drennan C.L."/>
        </authorList>
    </citation>
    <scope>X-RAY CRYSTALLOGRAPHY (3.4 ANGSTROMS) OF 2-346 IN COMPLEX WITH S-ADENOSYL-L-METHIONINE; IRON-SULFUR (2FE-2S) AND IRON-SULFUR (4FE-4S)</scope>
    <scope>COFACTOR</scope>
</reference>
<sequence length="346" mass="38648">MAHRPRWTLSQVTELFEKPLLDLLFEAQQVHRQHFDPRQVQVSTLLSIKTGACPEDCKYCPQSSRYKTGLEAERLMEVEQVLESARKAKAAGSTRFCMGAAWKNPHERDMPYLEQMVQGVKAMGLEACMTLGTLSESQAQRLANAGLDYYNHNLDTSPEFYGNIITTRTYQERLDTLEKVRDAGIKVCSGGIVGLGETVKDRAGLLLQLANLPTPPESVPINMLVKVKGTPLADNDDVDAFDFIRTIAVARIMMPTSYVRLSAGREQMNEQTQAMCFMAGANSIFYGCKLLTTPNPEEDKDLQLFRKLGLNPQQTAVLAGDNEQQQRLEQALMTPDTDEYYNAAAL</sequence>
<name>BIOB_ECOLI</name>
<keyword id="KW-0001">2Fe-2S</keyword>
<keyword id="KW-0002">3D-structure</keyword>
<keyword id="KW-0004">4Fe-4S</keyword>
<keyword id="KW-0093">Biotin biosynthesis</keyword>
<keyword id="KW-0903">Direct protein sequencing</keyword>
<keyword id="KW-0408">Iron</keyword>
<keyword id="KW-0411">Iron-sulfur</keyword>
<keyword id="KW-0479">Metal-binding</keyword>
<keyword id="KW-1185">Reference proteome</keyword>
<keyword id="KW-0949">S-adenosyl-L-methionine</keyword>
<keyword id="KW-0808">Transferase</keyword>
<evidence type="ECO:0000255" key="1">
    <source>
        <dbReference type="PROSITE-ProRule" id="PRU01266"/>
    </source>
</evidence>
<evidence type="ECO:0000269" key="2">
    <source>
    </source>
</evidence>
<evidence type="ECO:0000269" key="3">
    <source>
    </source>
</evidence>
<evidence type="ECO:0000269" key="4">
    <source>
    </source>
</evidence>
<evidence type="ECO:0000269" key="5">
    <source>
    </source>
</evidence>
<evidence type="ECO:0000269" key="6">
    <source>
    </source>
</evidence>
<evidence type="ECO:0000269" key="7">
    <source>
    </source>
</evidence>
<evidence type="ECO:0000303" key="8">
    <source>
    </source>
</evidence>
<evidence type="ECO:0000303" key="9">
    <source>
    </source>
</evidence>
<evidence type="ECO:0000305" key="10"/>
<evidence type="ECO:0000305" key="11">
    <source>
    </source>
</evidence>
<evidence type="ECO:0007744" key="12">
    <source>
        <dbReference type="PDB" id="1R30"/>
    </source>
</evidence>
<evidence type="ECO:0007829" key="13">
    <source>
        <dbReference type="PDB" id="1R30"/>
    </source>
</evidence>
<comment type="function">
    <text evidence="7">Catalyzes the conversion of dethiobiotin (DTB) to biotin by the insertion of a sulfur atom into dethiobiotin via a radical-based mechanism.</text>
</comment>
<comment type="catalytic activity">
    <reaction evidence="3 6 7">
        <text>(4R,5S)-dethiobiotin + (sulfur carrier)-SH + 2 reduced [2Fe-2S]-[ferredoxin] + 2 S-adenosyl-L-methionine = (sulfur carrier)-H + biotin + 2 5'-deoxyadenosine + 2 L-methionine + 2 oxidized [2Fe-2S]-[ferredoxin]</text>
        <dbReference type="Rhea" id="RHEA:22060"/>
        <dbReference type="Rhea" id="RHEA-COMP:10000"/>
        <dbReference type="Rhea" id="RHEA-COMP:10001"/>
        <dbReference type="Rhea" id="RHEA-COMP:14737"/>
        <dbReference type="Rhea" id="RHEA-COMP:14739"/>
        <dbReference type="ChEBI" id="CHEBI:17319"/>
        <dbReference type="ChEBI" id="CHEBI:29917"/>
        <dbReference type="ChEBI" id="CHEBI:33737"/>
        <dbReference type="ChEBI" id="CHEBI:33738"/>
        <dbReference type="ChEBI" id="CHEBI:57586"/>
        <dbReference type="ChEBI" id="CHEBI:57844"/>
        <dbReference type="ChEBI" id="CHEBI:59789"/>
        <dbReference type="ChEBI" id="CHEBI:64428"/>
        <dbReference type="ChEBI" id="CHEBI:149473"/>
        <dbReference type="EC" id="2.8.1.6"/>
    </reaction>
</comment>
<comment type="cofactor">
    <cofactor evidence="4 7">
        <name>[4Fe-4S] cluster</name>
        <dbReference type="ChEBI" id="CHEBI:49883"/>
    </cofactor>
    <text evidence="4 7">Binds 1 [4Fe-4S] cluster. The cluster is coordinated with 3 cysteines and an exchangeable S-adenosyl-L-methionine.</text>
</comment>
<comment type="cofactor">
    <cofactor evidence="4 7">
        <name>[2Fe-2S] cluster</name>
        <dbReference type="ChEBI" id="CHEBI:190135"/>
    </cofactor>
    <text evidence="4 7">Binds 1 [2Fe-2S] cluster. The cluster is coordinated with 3 cysteines and 1 arginine.</text>
</comment>
<comment type="activity regulation">
    <text evidence="5">Is physiologically inhibited by accumulation of the reaction product 5'-deoxyadenosine.</text>
</comment>
<comment type="biophysicochemical properties">
    <kinetics>
        <KM evidence="7">2 uM for dethiobiotin</KM>
    </kinetics>
</comment>
<comment type="pathway">
    <text evidence="11">Cofactor biosynthesis; biotin biosynthesis; biotin from 7,8-diaminononanoate: step 2/2.</text>
</comment>
<comment type="subunit">
    <text evidence="7">Homodimer.</text>
</comment>
<comment type="interaction">
    <interactant intactId="EBI-557917">
        <id>P12996</id>
    </interactant>
    <interactant intactId="EBI-1114805">
        <id>Q47147</id>
        <label>yafJ</label>
    </interactant>
    <organismsDiffer>false</organismsDiffer>
    <experiments>4</experiments>
</comment>
<comment type="similarity">
    <text evidence="10">Belongs to the radical SAM superfamily. Biotin synthase family.</text>
</comment>
<dbReference type="EC" id="2.8.1.6" evidence="3 6 7"/>
<dbReference type="EMBL" id="J04423">
    <property type="protein sequence ID" value="AAA23515.1"/>
    <property type="molecule type" value="Genomic_DNA"/>
</dbReference>
<dbReference type="EMBL" id="A11530">
    <property type="protein sequence ID" value="CAA00965.1"/>
    <property type="molecule type" value="Unassigned_DNA"/>
</dbReference>
<dbReference type="EMBL" id="U00096">
    <property type="protein sequence ID" value="AAC73862.1"/>
    <property type="molecule type" value="Genomic_DNA"/>
</dbReference>
<dbReference type="EMBL" id="AP009048">
    <property type="protein sequence ID" value="BAE76362.1"/>
    <property type="molecule type" value="Genomic_DNA"/>
</dbReference>
<dbReference type="PIR" id="JC2517">
    <property type="entry name" value="SYECBB"/>
</dbReference>
<dbReference type="RefSeq" id="NP_415296.1">
    <property type="nucleotide sequence ID" value="NC_000913.3"/>
</dbReference>
<dbReference type="RefSeq" id="WP_000951213.1">
    <property type="nucleotide sequence ID" value="NZ_SSZK01000002.1"/>
</dbReference>
<dbReference type="PDB" id="1R30">
    <property type="method" value="X-ray"/>
    <property type="resolution" value="3.40 A"/>
    <property type="chains" value="A/B=2-346"/>
</dbReference>
<dbReference type="PDBsum" id="1R30"/>
<dbReference type="SMR" id="P12996"/>
<dbReference type="BioGRID" id="4259949">
    <property type="interactions" value="39"/>
</dbReference>
<dbReference type="BioGRID" id="849746">
    <property type="interactions" value="13"/>
</dbReference>
<dbReference type="DIP" id="DIP-9220N"/>
<dbReference type="FunCoup" id="P12996">
    <property type="interactions" value="536"/>
</dbReference>
<dbReference type="IntAct" id="P12996">
    <property type="interactions" value="17"/>
</dbReference>
<dbReference type="STRING" id="511145.b0775"/>
<dbReference type="DrugBank" id="DB03775">
    <property type="generic name" value="Dethiobiotin"/>
</dbReference>
<dbReference type="PaxDb" id="511145-b0775"/>
<dbReference type="EnsemblBacteria" id="AAC73862">
    <property type="protein sequence ID" value="AAC73862"/>
    <property type="gene ID" value="b0775"/>
</dbReference>
<dbReference type="GeneID" id="93776655"/>
<dbReference type="GeneID" id="945370"/>
<dbReference type="KEGG" id="ecj:JW0758"/>
<dbReference type="KEGG" id="eco:b0775"/>
<dbReference type="KEGG" id="ecoc:C3026_04925"/>
<dbReference type="PATRIC" id="fig|1411691.4.peg.1503"/>
<dbReference type="EchoBASE" id="EB0116"/>
<dbReference type="eggNOG" id="COG0502">
    <property type="taxonomic scope" value="Bacteria"/>
</dbReference>
<dbReference type="HOGENOM" id="CLU_033172_1_2_6"/>
<dbReference type="InParanoid" id="P12996"/>
<dbReference type="OMA" id="NICTTHT"/>
<dbReference type="OrthoDB" id="9786826at2"/>
<dbReference type="PhylomeDB" id="P12996"/>
<dbReference type="BioCyc" id="EcoCyc:BIOTIN-SYN-MONOMER"/>
<dbReference type="BioCyc" id="MetaCyc:BIOTIN-SYN-MONOMER"/>
<dbReference type="BRENDA" id="2.8.1.6">
    <property type="organism ID" value="2026"/>
</dbReference>
<dbReference type="SABIO-RK" id="P12996"/>
<dbReference type="UniPathway" id="UPA00078">
    <property type="reaction ID" value="UER00162"/>
</dbReference>
<dbReference type="EvolutionaryTrace" id="P12996"/>
<dbReference type="PRO" id="PR:P12996"/>
<dbReference type="Proteomes" id="UP000000625">
    <property type="component" value="Chromosome"/>
</dbReference>
<dbReference type="GO" id="GO:0051537">
    <property type="term" value="F:2 iron, 2 sulfur cluster binding"/>
    <property type="evidence" value="ECO:0000314"/>
    <property type="project" value="EcoCyc"/>
</dbReference>
<dbReference type="GO" id="GO:0051539">
    <property type="term" value="F:4 iron, 4 sulfur cluster binding"/>
    <property type="evidence" value="ECO:0000314"/>
    <property type="project" value="EcoCyc"/>
</dbReference>
<dbReference type="GO" id="GO:0004076">
    <property type="term" value="F:biotin synthase activity"/>
    <property type="evidence" value="ECO:0000314"/>
    <property type="project" value="EcoCyc"/>
</dbReference>
<dbReference type="GO" id="GO:0005506">
    <property type="term" value="F:iron ion binding"/>
    <property type="evidence" value="ECO:0007669"/>
    <property type="project" value="UniProtKB-UniRule"/>
</dbReference>
<dbReference type="GO" id="GO:0042803">
    <property type="term" value="F:protein homodimerization activity"/>
    <property type="evidence" value="ECO:0000314"/>
    <property type="project" value="EcoCyc"/>
</dbReference>
<dbReference type="GO" id="GO:0009102">
    <property type="term" value="P:biotin biosynthetic process"/>
    <property type="evidence" value="ECO:0000315"/>
    <property type="project" value="EcoCyc"/>
</dbReference>
<dbReference type="CDD" id="cd01335">
    <property type="entry name" value="Radical_SAM"/>
    <property type="match status" value="1"/>
</dbReference>
<dbReference type="FunFam" id="3.20.20.70:FF:000011">
    <property type="entry name" value="Biotin synthase"/>
    <property type="match status" value="1"/>
</dbReference>
<dbReference type="Gene3D" id="3.20.20.70">
    <property type="entry name" value="Aldolase class I"/>
    <property type="match status" value="1"/>
</dbReference>
<dbReference type="HAMAP" id="MF_01694">
    <property type="entry name" value="BioB"/>
    <property type="match status" value="1"/>
</dbReference>
<dbReference type="InterPro" id="IPR013785">
    <property type="entry name" value="Aldolase_TIM"/>
</dbReference>
<dbReference type="InterPro" id="IPR010722">
    <property type="entry name" value="BATS_dom"/>
</dbReference>
<dbReference type="InterPro" id="IPR002684">
    <property type="entry name" value="Biotin_synth/BioAB"/>
</dbReference>
<dbReference type="InterPro" id="IPR024177">
    <property type="entry name" value="Biotin_synthase"/>
</dbReference>
<dbReference type="InterPro" id="IPR006638">
    <property type="entry name" value="Elp3/MiaA/NifB-like_rSAM"/>
</dbReference>
<dbReference type="InterPro" id="IPR007197">
    <property type="entry name" value="rSAM"/>
</dbReference>
<dbReference type="NCBIfam" id="TIGR00433">
    <property type="entry name" value="bioB"/>
    <property type="match status" value="1"/>
</dbReference>
<dbReference type="PANTHER" id="PTHR22976">
    <property type="entry name" value="BIOTIN SYNTHASE"/>
    <property type="match status" value="1"/>
</dbReference>
<dbReference type="PANTHER" id="PTHR22976:SF2">
    <property type="entry name" value="BIOTIN SYNTHASE, MITOCHONDRIAL"/>
    <property type="match status" value="1"/>
</dbReference>
<dbReference type="Pfam" id="PF06968">
    <property type="entry name" value="BATS"/>
    <property type="match status" value="1"/>
</dbReference>
<dbReference type="Pfam" id="PF04055">
    <property type="entry name" value="Radical_SAM"/>
    <property type="match status" value="1"/>
</dbReference>
<dbReference type="PIRSF" id="PIRSF001619">
    <property type="entry name" value="Biotin_synth"/>
    <property type="match status" value="1"/>
</dbReference>
<dbReference type="SFLD" id="SFLDG01060">
    <property type="entry name" value="BATS_domain_containing"/>
    <property type="match status" value="1"/>
</dbReference>
<dbReference type="SFLD" id="SFLDF00272">
    <property type="entry name" value="biotin_synthase"/>
    <property type="match status" value="1"/>
</dbReference>
<dbReference type="SMART" id="SM00876">
    <property type="entry name" value="BATS"/>
    <property type="match status" value="1"/>
</dbReference>
<dbReference type="SMART" id="SM00729">
    <property type="entry name" value="Elp3"/>
    <property type="match status" value="1"/>
</dbReference>
<dbReference type="SUPFAM" id="SSF102114">
    <property type="entry name" value="Radical SAM enzymes"/>
    <property type="match status" value="1"/>
</dbReference>
<dbReference type="PROSITE" id="PS51918">
    <property type="entry name" value="RADICAL_SAM"/>
    <property type="match status" value="1"/>
</dbReference>
<gene>
    <name evidence="9" type="primary">bioB</name>
    <name type="ordered locus">b0775</name>
    <name type="ordered locus">JW0758</name>
</gene>
<protein>
    <recommendedName>
        <fullName evidence="9">Biotin synthase</fullName>
        <ecNumber evidence="3 6 7">2.8.1.6</ecNumber>
    </recommendedName>
    <alternativeName>
        <fullName evidence="8">Biotin synthetase</fullName>
    </alternativeName>
</protein>
<feature type="chain" id="PRO_0000185552" description="Biotin synthase">
    <location>
        <begin position="1"/>
        <end position="346"/>
    </location>
</feature>
<feature type="domain" description="Radical SAM core" evidence="1">
    <location>
        <begin position="38"/>
        <end position="256"/>
    </location>
</feature>
<feature type="binding site" evidence="4 12">
    <location>
        <position position="53"/>
    </location>
    <ligand>
        <name>[4Fe-4S] cluster</name>
        <dbReference type="ChEBI" id="CHEBI:49883"/>
        <note>4Fe-4S-S-AdoMet</note>
    </ligand>
</feature>
<feature type="binding site" evidence="4 12">
    <location>
        <position position="57"/>
    </location>
    <ligand>
        <name>[4Fe-4S] cluster</name>
        <dbReference type="ChEBI" id="CHEBI:49883"/>
        <note>4Fe-4S-S-AdoMet</note>
    </ligand>
</feature>
<feature type="binding site" evidence="4 12">
    <location>
        <position position="60"/>
    </location>
    <ligand>
        <name>[4Fe-4S] cluster</name>
        <dbReference type="ChEBI" id="CHEBI:49883"/>
        <note>4Fe-4S-S-AdoMet</note>
    </ligand>
</feature>
<feature type="binding site" evidence="4 12">
    <location>
        <position position="97"/>
    </location>
    <ligand>
        <name>[2Fe-2S] cluster</name>
        <dbReference type="ChEBI" id="CHEBI:190135"/>
    </ligand>
</feature>
<feature type="binding site" evidence="4 12">
    <location>
        <position position="128"/>
    </location>
    <ligand>
        <name>[2Fe-2S] cluster</name>
        <dbReference type="ChEBI" id="CHEBI:190135"/>
    </ligand>
</feature>
<feature type="binding site" evidence="4 12">
    <location>
        <position position="188"/>
    </location>
    <ligand>
        <name>[2Fe-2S] cluster</name>
        <dbReference type="ChEBI" id="CHEBI:190135"/>
    </ligand>
</feature>
<feature type="binding site" evidence="4 12">
    <location>
        <position position="260"/>
    </location>
    <ligand>
        <name>[2Fe-2S] cluster</name>
        <dbReference type="ChEBI" id="CHEBI:190135"/>
    </ligand>
</feature>
<feature type="mutagenesis site" description="Total loss of activity." evidence="2 3">
    <original>C</original>
    <variation>A</variation>
    <location>
        <position position="53"/>
    </location>
</feature>
<feature type="mutagenesis site" description="Total loss of activity." evidence="2 3">
    <original>C</original>
    <variation>A</variation>
    <location>
        <position position="57"/>
    </location>
</feature>
<feature type="mutagenesis site" description="Total loss of activity." evidence="2 3">
    <original>C</original>
    <variation>A</variation>
    <location>
        <position position="60"/>
    </location>
</feature>
<feature type="mutagenesis site" description="Total loss of activity." evidence="2 3">
    <original>C</original>
    <variation>A</variation>
    <location>
        <position position="97"/>
    </location>
</feature>
<feature type="mutagenesis site" description="Total loss of activity." evidence="2 3">
    <original>C</original>
    <variation>A</variation>
    <location>
        <position position="128"/>
    </location>
</feature>
<feature type="mutagenesis site" description="Total loss of activity." evidence="6">
    <original>N</original>
    <variation>A</variation>
    <location>
        <position position="151"/>
    </location>
</feature>
<feature type="mutagenesis site" description="Weak activity." evidence="6">
    <original>H</original>
    <variation>A</variation>
    <location>
        <position position="152"/>
    </location>
</feature>
<feature type="mutagenesis site" description="Total loss of activity." evidence="6">
    <original>N</original>
    <variation>A</variation>
    <location>
        <position position="153"/>
    </location>
</feature>
<feature type="mutagenesis site" description="Total loss of activity." evidence="6">
    <original>D</original>
    <variation>A</variation>
    <location>
        <position position="155"/>
    </location>
</feature>
<feature type="mutagenesis site" description="Total loss of activity." evidence="2 3">
    <original>C</original>
    <variation>A</variation>
    <location>
        <position position="188"/>
    </location>
</feature>
<feature type="sequence conflict" description="In Ref. 1; AAA23515." evidence="10" ref="1">
    <original>S</original>
    <variation>T</variation>
    <location>
        <position position="63"/>
    </location>
</feature>
<feature type="turn" evidence="13">
    <location>
        <begin position="10"/>
        <end position="12"/>
    </location>
</feature>
<feature type="helix" evidence="13">
    <location>
        <begin position="13"/>
        <end position="17"/>
    </location>
</feature>
<feature type="helix" evidence="13">
    <location>
        <begin position="20"/>
        <end position="34"/>
    </location>
</feature>
<feature type="strand" evidence="13">
    <location>
        <begin position="41"/>
        <end position="49"/>
    </location>
</feature>
<feature type="strand" evidence="13">
    <location>
        <begin position="53"/>
        <end position="55"/>
    </location>
</feature>
<feature type="helix" evidence="13">
    <location>
        <begin position="78"/>
        <end position="90"/>
    </location>
</feature>
<feature type="strand" evidence="13">
    <location>
        <begin position="94"/>
        <end position="100"/>
    </location>
</feature>
<feature type="turn" evidence="13">
    <location>
        <begin position="107"/>
        <end position="109"/>
    </location>
</feature>
<feature type="helix" evidence="13">
    <location>
        <begin position="110"/>
        <end position="122"/>
    </location>
</feature>
<feature type="strand" evidence="13">
    <location>
        <begin position="125"/>
        <end position="130"/>
    </location>
</feature>
<feature type="helix" evidence="13">
    <location>
        <begin position="136"/>
        <end position="145"/>
    </location>
</feature>
<feature type="strand" evidence="13">
    <location>
        <begin position="149"/>
        <end position="151"/>
    </location>
</feature>
<feature type="helix" evidence="13">
    <location>
        <begin position="158"/>
        <end position="164"/>
    </location>
</feature>
<feature type="helix" evidence="13">
    <location>
        <begin position="170"/>
        <end position="184"/>
    </location>
</feature>
<feature type="strand" evidence="13">
    <location>
        <begin position="186"/>
        <end position="188"/>
    </location>
</feature>
<feature type="strand" evidence="13">
    <location>
        <begin position="191"/>
        <end position="193"/>
    </location>
</feature>
<feature type="helix" evidence="13">
    <location>
        <begin position="199"/>
        <end position="210"/>
    </location>
</feature>
<feature type="strand" evidence="13">
    <location>
        <begin position="211"/>
        <end position="214"/>
    </location>
</feature>
<feature type="strand" evidence="13">
    <location>
        <begin position="217"/>
        <end position="223"/>
    </location>
</feature>
<feature type="helix" evidence="13">
    <location>
        <begin position="240"/>
        <end position="253"/>
    </location>
</feature>
<feature type="strand" evidence="13">
    <location>
        <begin position="257"/>
        <end position="264"/>
    </location>
</feature>
<feature type="helix" evidence="13">
    <location>
        <begin position="265"/>
        <end position="267"/>
    </location>
</feature>
<feature type="helix" evidence="13">
    <location>
        <begin position="270"/>
        <end position="279"/>
    </location>
</feature>
<feature type="strand" evidence="13">
    <location>
        <begin position="283"/>
        <end position="285"/>
    </location>
</feature>
<feature type="strand" evidence="13">
    <location>
        <begin position="287"/>
        <end position="294"/>
    </location>
</feature>
<feature type="helix" evidence="13">
    <location>
        <begin position="298"/>
        <end position="307"/>
    </location>
</feature>